<organism>
    <name type="scientific">Synechococcus sp. (strain CC9902)</name>
    <dbReference type="NCBI Taxonomy" id="316279"/>
    <lineage>
        <taxon>Bacteria</taxon>
        <taxon>Bacillati</taxon>
        <taxon>Cyanobacteriota</taxon>
        <taxon>Cyanophyceae</taxon>
        <taxon>Synechococcales</taxon>
        <taxon>Synechococcaceae</taxon>
        <taxon>Synechococcus</taxon>
    </lineage>
</organism>
<evidence type="ECO:0000255" key="1">
    <source>
        <dbReference type="HAMAP-Rule" id="MF_01014"/>
    </source>
</evidence>
<evidence type="ECO:0000305" key="2"/>
<gene>
    <name evidence="1" type="primary">hisA</name>
    <name type="ordered locus">Syncc9902_0777</name>
</gene>
<keyword id="KW-0028">Amino-acid biosynthesis</keyword>
<keyword id="KW-0963">Cytoplasm</keyword>
<keyword id="KW-0368">Histidine biosynthesis</keyword>
<keyword id="KW-0413">Isomerase</keyword>
<keyword id="KW-1185">Reference proteome</keyword>
<dbReference type="EC" id="5.3.1.16" evidence="1"/>
<dbReference type="EMBL" id="CP000097">
    <property type="protein sequence ID" value="ABB25745.1"/>
    <property type="status" value="ALT_INIT"/>
    <property type="molecule type" value="Genomic_DNA"/>
</dbReference>
<dbReference type="RefSeq" id="WP_041425333.1">
    <property type="nucleotide sequence ID" value="NC_007513.1"/>
</dbReference>
<dbReference type="SMR" id="Q3AYT2"/>
<dbReference type="STRING" id="316279.Syncc9902_0777"/>
<dbReference type="KEGG" id="sye:Syncc9902_0777"/>
<dbReference type="eggNOG" id="COG0106">
    <property type="taxonomic scope" value="Bacteria"/>
</dbReference>
<dbReference type="HOGENOM" id="CLU_048577_1_1_3"/>
<dbReference type="OrthoDB" id="9807749at2"/>
<dbReference type="UniPathway" id="UPA00031">
    <property type="reaction ID" value="UER00009"/>
</dbReference>
<dbReference type="Proteomes" id="UP000002712">
    <property type="component" value="Chromosome"/>
</dbReference>
<dbReference type="GO" id="GO:0005737">
    <property type="term" value="C:cytoplasm"/>
    <property type="evidence" value="ECO:0007669"/>
    <property type="project" value="UniProtKB-SubCell"/>
</dbReference>
<dbReference type="GO" id="GO:0003949">
    <property type="term" value="F:1-(5-phosphoribosyl)-5-[(5-phosphoribosylamino)methylideneamino]imidazole-4-carboxamide isomerase activity"/>
    <property type="evidence" value="ECO:0007669"/>
    <property type="project" value="UniProtKB-UniRule"/>
</dbReference>
<dbReference type="GO" id="GO:0000105">
    <property type="term" value="P:L-histidine biosynthetic process"/>
    <property type="evidence" value="ECO:0007669"/>
    <property type="project" value="UniProtKB-UniRule"/>
</dbReference>
<dbReference type="GO" id="GO:0000162">
    <property type="term" value="P:L-tryptophan biosynthetic process"/>
    <property type="evidence" value="ECO:0007669"/>
    <property type="project" value="TreeGrafter"/>
</dbReference>
<dbReference type="CDD" id="cd04732">
    <property type="entry name" value="HisA"/>
    <property type="match status" value="1"/>
</dbReference>
<dbReference type="FunFam" id="3.20.20.70:FF:000009">
    <property type="entry name" value="1-(5-phosphoribosyl)-5-[(5-phosphoribosylamino)methylideneamino] imidazole-4-carboxamide isomerase"/>
    <property type="match status" value="1"/>
</dbReference>
<dbReference type="Gene3D" id="3.20.20.70">
    <property type="entry name" value="Aldolase class I"/>
    <property type="match status" value="1"/>
</dbReference>
<dbReference type="HAMAP" id="MF_01014">
    <property type="entry name" value="HisA"/>
    <property type="match status" value="1"/>
</dbReference>
<dbReference type="InterPro" id="IPR013785">
    <property type="entry name" value="Aldolase_TIM"/>
</dbReference>
<dbReference type="InterPro" id="IPR006062">
    <property type="entry name" value="His_biosynth"/>
</dbReference>
<dbReference type="InterPro" id="IPR006063">
    <property type="entry name" value="HisA_bact_arch"/>
</dbReference>
<dbReference type="InterPro" id="IPR044524">
    <property type="entry name" value="Isoase_HisA-like"/>
</dbReference>
<dbReference type="InterPro" id="IPR023016">
    <property type="entry name" value="Isoase_HisA-like_bact"/>
</dbReference>
<dbReference type="InterPro" id="IPR011060">
    <property type="entry name" value="RibuloseP-bd_barrel"/>
</dbReference>
<dbReference type="NCBIfam" id="TIGR00007">
    <property type="entry name" value="1-(5-phosphoribosyl)-5-[(5-phosphoribosylamino)methylideneamino]imidazole-4-carboxamide isomerase"/>
    <property type="match status" value="1"/>
</dbReference>
<dbReference type="NCBIfam" id="NF010112">
    <property type="entry name" value="PRK13585.1"/>
    <property type="match status" value="1"/>
</dbReference>
<dbReference type="PANTHER" id="PTHR43090">
    <property type="entry name" value="1-(5-PHOSPHORIBOSYL)-5-[(5-PHOSPHORIBOSYLAMINO)METHYLIDENEAMINO] IMIDAZOLE-4-CARBOXAMIDE ISOMERASE"/>
    <property type="match status" value="1"/>
</dbReference>
<dbReference type="PANTHER" id="PTHR43090:SF2">
    <property type="entry name" value="1-(5-PHOSPHORIBOSYL)-5-[(5-PHOSPHORIBOSYLAMINO)METHYLIDENEAMINO] IMIDAZOLE-4-CARBOXAMIDE ISOMERASE"/>
    <property type="match status" value="1"/>
</dbReference>
<dbReference type="Pfam" id="PF00977">
    <property type="entry name" value="His_biosynth"/>
    <property type="match status" value="1"/>
</dbReference>
<dbReference type="SUPFAM" id="SSF51366">
    <property type="entry name" value="Ribulose-phoshate binding barrel"/>
    <property type="match status" value="1"/>
</dbReference>
<accession>Q3AYT2</accession>
<comment type="catalytic activity">
    <reaction evidence="1">
        <text>1-(5-phospho-beta-D-ribosyl)-5-[(5-phospho-beta-D-ribosylamino)methylideneamino]imidazole-4-carboxamide = 5-[(5-phospho-1-deoxy-D-ribulos-1-ylimino)methylamino]-1-(5-phospho-beta-D-ribosyl)imidazole-4-carboxamide</text>
        <dbReference type="Rhea" id="RHEA:15469"/>
        <dbReference type="ChEBI" id="CHEBI:58435"/>
        <dbReference type="ChEBI" id="CHEBI:58525"/>
        <dbReference type="EC" id="5.3.1.16"/>
    </reaction>
</comment>
<comment type="pathway">
    <text evidence="1">Amino-acid biosynthesis; L-histidine biosynthesis; L-histidine from 5-phospho-alpha-D-ribose 1-diphosphate: step 4/9.</text>
</comment>
<comment type="subcellular location">
    <subcellularLocation>
        <location evidence="1">Cytoplasm</location>
    </subcellularLocation>
</comment>
<comment type="similarity">
    <text evidence="1">Belongs to the HisA/HisF family.</text>
</comment>
<comment type="sequence caution" evidence="2">
    <conflict type="erroneous initiation">
        <sequence resource="EMBL-CDS" id="ABB25745"/>
    </conflict>
</comment>
<feature type="chain" id="PRO_0000290553" description="1-(5-phosphoribosyl)-5-[(5-phosphoribosylamino)methylideneamino] imidazole-4-carboxamide isomerase">
    <location>
        <begin position="1"/>
        <end position="255"/>
    </location>
</feature>
<feature type="active site" description="Proton acceptor" evidence="1">
    <location>
        <position position="8"/>
    </location>
</feature>
<feature type="active site" description="Proton donor" evidence="1">
    <location>
        <position position="129"/>
    </location>
</feature>
<reference key="1">
    <citation type="submission" date="2005-08" db="EMBL/GenBank/DDBJ databases">
        <title>Complete sequence of Synechococcus sp. CC9902.</title>
        <authorList>
            <person name="Copeland A."/>
            <person name="Lucas S."/>
            <person name="Lapidus A."/>
            <person name="Barry K."/>
            <person name="Detter J.C."/>
            <person name="Glavina T."/>
            <person name="Hammon N."/>
            <person name="Israni S."/>
            <person name="Pitluck S."/>
            <person name="Martinez M."/>
            <person name="Schmutz J."/>
            <person name="Larimer F."/>
            <person name="Land M."/>
            <person name="Kyrpides N."/>
            <person name="Ivanova N."/>
            <person name="Richardson P."/>
        </authorList>
    </citation>
    <scope>NUCLEOTIDE SEQUENCE [LARGE SCALE GENOMIC DNA]</scope>
    <source>
        <strain>CC9902</strain>
    </source>
</reference>
<name>HIS4_SYNS9</name>
<protein>
    <recommendedName>
        <fullName evidence="1">1-(5-phosphoribosyl)-5-[(5-phosphoribosylamino)methylideneamino] imidazole-4-carboxamide isomerase</fullName>
        <ecNumber evidence="1">5.3.1.16</ecNumber>
    </recommendedName>
    <alternativeName>
        <fullName evidence="1">Phosphoribosylformimino-5-aminoimidazole carboxamide ribotide isomerase</fullName>
    </alternativeName>
</protein>
<sequence>MEIIPAIDLLDGACVRLHQGDYDQVTRFSDDPVAQALSWQSQGAKRLHLVDLDGAKRGEPANDAAVRAIANALDIPVQLGGGVRSIERAEDLLNCGLERVILGTVAIEQPDLVQVLAERHPGSVVVGIDANKGKVATRGWLEQSDVLATDLARRFSDSGIAAIITTDIATDGTLAGPNLDALREMAQASSVPVIASGGIGCMADLLSLLPLEDQGVSGVIVGRALYDGRIDLAEAIGAIGDDRLQDITCGSTDLA</sequence>
<proteinExistence type="inferred from homology"/>